<protein>
    <recommendedName>
        <fullName evidence="14">Mu-conotoxin KIIIB</fullName>
    </recommendedName>
    <component>
        <recommendedName>
            <fullName evidence="13">Mu-conotoxin KIIIA</fullName>
        </recommendedName>
    </component>
</protein>
<reference key="1">
    <citation type="journal article" date="2005" name="Biochemistry">
        <title>Novel conotoxins from Conus striatus and Conus kinoshitai selectively block TTX-resistant sodium channels.</title>
        <authorList>
            <person name="Bulaj G."/>
            <person name="West P.J."/>
            <person name="Garrett J.E."/>
            <person name="Watkins M."/>
            <person name="Zhang M.-M."/>
            <person name="Norton R.S."/>
            <person name="Smith B.J."/>
            <person name="Yoshikami D."/>
            <person name="Olivera B.M."/>
        </authorList>
    </citation>
    <scope>NUCLEOTIDE SEQUENCE [MRNA] OF 5-22</scope>
    <scope>FUNCTION</scope>
    <scope>SYNTHESIS OF 5-20</scope>
    <scope>AMIDATION AT CYS-20</scope>
    <source>
        <tissue>Venom duct</tissue>
    </source>
</reference>
<reference key="2">
    <citation type="journal article" date="2006" name="Biochemistry">
        <authorList>
            <person name="Bulaj G."/>
            <person name="West P.J."/>
            <person name="Garrett J.E."/>
            <person name="Watkins M."/>
            <person name="Zhang M.-M."/>
            <person name="Norton R.S."/>
            <person name="Smith B.J."/>
            <person name="Yoshikami D."/>
            <person name="Olivera B.M."/>
        </authorList>
    </citation>
    <scope>ERRATUM OF PUBMED:15882064</scope>
</reference>
<reference key="3">
    <citation type="journal article" date="2007" name="J. Biol. Chem.">
        <title>Structure/function characterization of mu-conotoxin KIIIA, an analgesic, nearly irreversible blocker of mammalian neuronal sodium channels.</title>
        <authorList>
            <person name="Zhang M.-M."/>
            <person name="Green B.R."/>
            <person name="Catlin P."/>
            <person name="Fiedler B."/>
            <person name="Azam L."/>
            <person name="Chadwick A."/>
            <person name="Terlau H."/>
            <person name="McArthur J.R."/>
            <person name="French R.J."/>
            <person name="Gulyas J."/>
            <person name="Rivier J.E."/>
            <person name="Smith B.J."/>
            <person name="Norton R.S."/>
            <person name="Olivera B.M."/>
            <person name="Yoshikami D."/>
            <person name="Bulaj G."/>
        </authorList>
    </citation>
    <scope>FUNCTION</scope>
    <scope>SYNTHESIS OF 5-20</scope>
    <scope>MUTAGENESIS OF LYS-11; TRP-12; ARG-14; ASP-15; HIS-16 AND ARG-18</scope>
</reference>
<reference key="4">
    <citation type="journal article" date="2009" name="Toxicon">
        <title>Pruning nature: biodiversity-derived discovery of novel sodium channel blocking conotoxins from Conus bullatus.</title>
        <authorList>
            <person name="Holford M."/>
            <person name="Zhang M.-M."/>
            <person name="Gowd K.H."/>
            <person name="Azam L."/>
            <person name="Green B.R."/>
            <person name="Watkins M."/>
            <person name="Ownby J.-P."/>
            <person name="Yoshikami D."/>
            <person name="Bulaj G."/>
            <person name="Olivera B.M."/>
        </authorList>
    </citation>
    <scope>FUNCTION</scope>
    <scope>SYNTHESIS OF 5-20</scope>
</reference>
<reference key="5">
    <citation type="journal article" date="2009" name="Channels">
        <title>Synergistic and antagonistic interactions between tetrodotoxin and mu-conotoxin in blocking voltage-gated sodium channels.</title>
        <authorList>
            <person name="Zhang M.M."/>
            <person name="McArthur J.R."/>
            <person name="Azam L."/>
            <person name="Bulaj G."/>
            <person name="Olivera B.M."/>
            <person name="French R.J."/>
            <person name="Yoshikami D."/>
        </authorList>
    </citation>
    <scope>FUNCTION</scope>
    <scope>MUTAGENESIS OF LYS-11</scope>
</reference>
<reference key="6">
    <citation type="journal article" date="2011" name="FEBS J.">
        <title>Importance of position 8 in mu-conotoxin KIIIA for voltage-gated sodium channel selectivity.</title>
        <authorList>
            <person name="Van Der Haegen A."/>
            <person name="Peigneur S."/>
            <person name="Tytgat J."/>
        </authorList>
    </citation>
    <scope>FUNCTION</scope>
    <scope>SYNTHESIS OF 5-20</scope>
    <scope>MUTAGENESIS OF TRP-12</scope>
</reference>
<reference key="7">
    <citation type="journal article" date="2011" name="Mol. Pharmacol.">
        <title>Interactions of key charged residues contributing to selective block of neuronal sodium channels by mu-conotoxin KIIIA.</title>
        <authorList>
            <person name="McArthur J.R."/>
            <person name="Singh G."/>
            <person name="McMaster D."/>
            <person name="Winkfein R."/>
            <person name="Tieleman D.P."/>
            <person name="French R.J."/>
        </authorList>
    </citation>
    <scope>FUNCTION</scope>
    <scope>SYNTHESIS OF 5-20</scope>
    <scope>MUTAGENESIS OF LYS-11; ARG-14; HIS-16 AND ARG-18</scope>
</reference>
<reference key="8">
    <citation type="journal article" date="2011" name="Proc. Natl. Acad. Sci. U.S.A.">
        <title>mu-Conotoxins that differentially block sodium channels Nav1.1 through 1.8 identify those responsible for action potentials in sciatic nerve.</title>
        <authorList>
            <person name="Wilson M.J."/>
            <person name="Yoshikami D."/>
            <person name="Azam L."/>
            <person name="Gajewiak J."/>
            <person name="Olivera B.M."/>
            <person name="Bulaj G."/>
            <person name="Zhang M.M."/>
        </authorList>
    </citation>
    <scope>FUNCTION</scope>
    <scope>SYNTHESIS OF 5-20</scope>
</reference>
<reference key="9">
    <citation type="journal article" date="2013" name="Br. J. Pharmacol.">
        <title>Co-expression of Na(V)beta subunits alters the kinetics of inhibition of voltage-gated sodium channels by pore-blocking mu-conotoxins.</title>
        <authorList>
            <person name="Zhang M.M."/>
            <person name="Wilson M.J."/>
            <person name="Azam L."/>
            <person name="Gajewiak J."/>
            <person name="Rivier J.E."/>
            <person name="Bulaj G."/>
            <person name="Olivera B.M."/>
            <person name="Yoshikami D."/>
        </authorList>
    </citation>
    <scope>FUNCTION</scope>
</reference>
<reference key="10">
    <citation type="journal article" date="2015" name="J. Med. Chem.">
        <title>Engineering potent and selective analogues of GpTx-1, a tarantula venom peptide antagonist of the Na(V)1.7 sodium channel.</title>
        <authorList>
            <person name="Murray J.K."/>
            <person name="Ligutti J."/>
            <person name="Liu D."/>
            <person name="Zou A."/>
            <person name="Poppe L."/>
            <person name="Li H."/>
            <person name="Andrews K.L."/>
            <person name="Moyer B.D."/>
            <person name="McDonough S.I."/>
            <person name="Favreau P."/>
            <person name="Stoecklin R."/>
            <person name="Miranda L.P."/>
        </authorList>
    </citation>
    <scope>FUNCTION</scope>
</reference>
<reference key="11">
    <citation type="journal article" date="2009" name="Biochemistry">
        <title>Structure of the analgesic mu-conotoxin KIIIA and effects on the structure and function of disulfide deletion.</title>
        <authorList>
            <person name="Khoo K.K."/>
            <person name="Feng Z.-P."/>
            <person name="Smith B.J."/>
            <person name="Zhang M.-M."/>
            <person name="Yoshikami D."/>
            <person name="Olivera B.M."/>
            <person name="Bulaj G."/>
            <person name="Norton R.S."/>
        </authorList>
    </citation>
    <scope>STRUCTURE BY NMR OF 5-20 (MU-CONOTOXIN KIIIA)</scope>
    <scope>SYNTHESIS OF 5-20</scope>
    <scope>SUBUNIT</scope>
    <scope>MUTAGENESIS OF CYS-5 AND CYS-13</scope>
</reference>
<reference key="12">
    <citation type="journal article" date="2012" name="Biochemistry">
        <title>Distinct disulfide isomers of mu-conotoxins KIIIA and KIIIB block voltage-gated sodium channels.</title>
        <authorList>
            <person name="Khoo K.K."/>
            <person name="Gupta K."/>
            <person name="Green B.R."/>
            <person name="Zhang M.M."/>
            <person name="Watkins M."/>
            <person name="Olivera B.M."/>
            <person name="Balaram P."/>
            <person name="Yoshikami D."/>
            <person name="Bulaj G."/>
            <person name="Norton R.S."/>
        </authorList>
    </citation>
    <scope>STRUCTURE BY NMR OF 3-20 AND 5-20 (MU-CONOTOXIN KIIIA AND KIIIB)</scope>
    <scope>SYNTHESIS OF 3-20 AND 5-20</scope>
    <scope>FUNCTION</scope>
    <scope>DISULFIDE BOND OF SYNTHETIC PEPTIDES (P1 AND P2)</scope>
</reference>
<reference key="13">
    <citation type="journal article" date="2019" name="Science">
        <title>Molecular basis for pore blockade of human Na+ channel Nav1.2 by the mu-conotoxin KIIIA.</title>
        <authorList>
            <person name="Pan X."/>
            <person name="Li Z."/>
            <person name="Huang X."/>
            <person name="Huang G."/>
            <person name="Gao S."/>
            <person name="Shen H."/>
            <person name="Liu L."/>
            <person name="Lei J."/>
            <person name="Yan N."/>
        </authorList>
    </citation>
    <scope>STRUCTURE BY ELECTRON MICROSCOPY (3.0 ANGSTROMS) OF 5-20 (MU-CONOTOXIN KIIIA) IN COMPLEX WITH SUBUNITS ALPHA AND BETA-2 OF NAV1.2</scope>
    <scope>DISULFIDE BOND</scope>
</reference>
<reference key="14">
    <citation type="journal article" date="2022" name="J. Biol. Chem.">
        <title>Structural and functional insights into the inhibition of human voltage-gated sodium channels by mu-conotoxin KIIIA disulfide isomers.</title>
        <authorList>
            <person name="Tran H.N.T."/>
            <person name="McMahon K.L."/>
            <person name="Deuis J.R."/>
            <person name="Vetter I."/>
            <person name="Schroeder C.I."/>
        </authorList>
    </citation>
    <scope>STRUCTURE BY NMR OF 5-20</scope>
    <scope>FUNCTION</scope>
    <scope>SYNTHESIS OF 5-20</scope>
    <scope>DISULFIDE BOND OF SYNTHETIC PEPTIDES (P1; P2 AND N)</scope>
    <scope>3D-STRUCTURE MODELING IN COMPLEX WITH SODIUM CHANNEL NAV12/SCN2A</scope>
</reference>
<feature type="propeptide" id="PRO_0000442339" evidence="18">
    <location>
        <begin position="1" status="less than"/>
        <end position="2"/>
    </location>
</feature>
<feature type="peptide" id="PRO_0000442340" description="Mu-conotoxin KIIIB" evidence="18">
    <location>
        <begin position="3"/>
        <end position="20"/>
    </location>
</feature>
<feature type="peptide" id="PRO_0000232662" description="Mu-conotoxin KIIIA" evidence="16">
    <location>
        <begin position="5"/>
        <end position="20"/>
    </location>
</feature>
<feature type="region of interest" description="Pharmacophore key residues" evidence="17 19">
    <location>
        <begin position="14"/>
        <end position="16"/>
    </location>
</feature>
<feature type="region of interest" description="Pharmacophore key residues" evidence="17 19">
    <location>
        <begin position="18"/>
        <end position="19"/>
    </location>
</feature>
<feature type="site" description="Pharmacophore key residue" evidence="19">
    <location>
        <position position="7"/>
    </location>
</feature>
<feature type="site" description="Pharmacophore key residue, the side chain functions like a cork in the bottleneck, with the positively charged amine group preventing the penetration of sodium" evidence="19">
    <location>
        <position position="11"/>
    </location>
</feature>
<feature type="site" description="Pharmacophore key residue" evidence="19">
    <location>
        <position position="12"/>
    </location>
</feature>
<feature type="modified residue" description="Cysteine amide" evidence="16">
    <location>
        <position position="20"/>
    </location>
</feature>
<feature type="disulfide bond" description="in KIIIA-P2 and KIIIB-P1; alternate" evidence="18">
    <location>
        <begin position="5"/>
        <end position="20"/>
    </location>
</feature>
<feature type="disulfide bond" description="in KIIIA-P1 and KIIIB-P2; alternate" evidence="18 19 21 22">
    <location>
        <begin position="5"/>
        <end position="19"/>
    </location>
</feature>
<feature type="disulfide bond" description="in KIIIA-M; alternate" evidence="20">
    <location>
        <begin position="5"/>
        <end position="13"/>
    </location>
</feature>
<feature type="disulfide bond" description="in KIIIA-M; alternate" evidence="20">
    <location>
        <begin position="6"/>
        <end position="19"/>
    </location>
</feature>
<feature type="disulfide bond" description="in KIIIA-P1, KIIIA-P2, KIIIB-P1 and KIIIB-P2; alternate" evidence="18 19 21 22">
    <location>
        <begin position="6"/>
        <end position="13"/>
    </location>
</feature>
<feature type="disulfide bond" description="in KIIIA-P1, KIIIB-P2 and KIIIA-M; alternate" evidence="18 19 21 22">
    <location>
        <begin position="8"/>
        <end position="20"/>
    </location>
</feature>
<feature type="disulfide bond" description="in KIIIA-P2 and KIIIB-P1; alternate" evidence="18">
    <location>
        <begin position="8"/>
        <end position="19"/>
    </location>
</feature>
<feature type="mutagenesis site" description="Structure similar to wild-type toxin, even with this disulfide bond deletion." evidence="4">
    <original>C</original>
    <variation>A</variation>
    <location>
        <position position="5"/>
    </location>
</feature>
<feature type="mutagenesis site" description="Decrease in ability to block Nav1.3, Nav1.4, Nav1.6 and Nav1.7, but not Nav1.2. 21-fold decrease in binding affinity for Nav1.2." evidence="2 5 7">
    <original>K</original>
    <variation>A</variation>
    <location>
        <position position="11"/>
    </location>
</feature>
<feature type="mutagenesis site" description="Decrease in ability to block both Nav1.2 and Nav1.4. Decrease in binding affinity for Nav1.2, Nav1.4, and Nav1.7." evidence="2 8">
    <original>W</original>
    <variation>A</variation>
    <location>
        <position position="12"/>
    </location>
</feature>
<feature type="mutagenesis site" description="200-fold decrease in ability to block Nav1.4. Block of Nav1.2 is completely reversible." evidence="2 8">
    <original>W</original>
    <variation>E</variation>
    <location>
        <position position="12"/>
    </location>
</feature>
<feature type="mutagenesis site" description="70-fold decrease in ability to block Nav1.4. Block of Nav1.2 is completely reversible." evidence="2 8">
    <original>W</original>
    <variation>Q</variation>
    <location>
        <position position="12"/>
    </location>
</feature>
<feature type="mutagenesis site" description="40-fold decrease in ability to block Nav1.4. Block of Nav1.2 is completely reversible." evidence="2 8">
    <original>W</original>
    <variation>R</variation>
    <location>
        <position position="12"/>
    </location>
</feature>
<feature type="mutagenesis site" description="Structure similar to wild-type toxin, even with this disulfide bond deletion." evidence="4">
    <original>C</original>
    <variation>A</variation>
    <location>
        <position position="13"/>
    </location>
</feature>
<feature type="mutagenesis site" description="Decrease in ability to block both Nav1.4 and Nav1.2, and decrease in binding affinity for Nav1.2, Nav1.4, and Nav1.7." evidence="2 7">
    <original>R</original>
    <variation>A</variation>
    <location>
        <position position="14"/>
    </location>
</feature>
<feature type="mutagenesis site" description="Decrease in ability to inhibit both Nav1.4 and Nav1.2." evidence="2">
    <original>D</original>
    <variation>A</variation>
    <location>
        <position position="15"/>
    </location>
</feature>
<feature type="mutagenesis site" description="Decrease in ability to inhibit both Nav1.4 and Nav1.2, and potently decreases the binding affinity for Nav1.2, Nav1.4, and Nav1.7." evidence="2 7">
    <original>H</original>
    <variation>A</variation>
    <location>
        <position position="16"/>
    </location>
</feature>
<feature type="mutagenesis site" description="Decrease in ability to inhibit both Nav1.4 and Nav1.2, and the binding affinity for Nav1.2, Nav1.4, and Nav1.7." evidence="2 7">
    <original>R</original>
    <variation>A</variation>
    <location>
        <position position="18"/>
    </location>
</feature>
<feature type="non-terminal residue" evidence="18">
    <location>
        <position position="1"/>
    </location>
</feature>
<feature type="helix" evidence="23">
    <location>
        <begin position="11"/>
        <end position="16"/>
    </location>
</feature>
<proteinExistence type="evidence at transcript level"/>
<name>CM3A_CONKI</name>
<accession>P0C195</accession>
<comment type="function">
    <text evidence="1 2 3 5 6 7 8 9 11">Mu-conotoxin KIIIA-P1: mu-conotoxins block voltage-gated sodium channels (Nav). This toxin potently blocks Nav1.2/SCN2A (IC(50)5-124 nM), Nav1.4/SCN4A (IC(50)=20-90 nM), and Nav1.7/SCN9A (IC(50)=290-413 nM) (PubMed:17724025, PubMed:19221510, PubMed:21652775, PubMed:21709136, PubMed:21781281, PubMed:23146020, PubMed:25658507, PubMed:35167877). It moderately blocks Nav1.1/SCN1A, and mNav1.6/SCN8A (PubMed:17724025, PubMed:21652775, PubMed:21709136, PubMed:21781281, PubMed:23146020, PubMed:25658507, PubMed:35167877). It also shows a very low activity on Nav1.3/SCN3A (PubMed:17724025, PubMed:21781281). This toxin binds a microsite within the pore different from the tetrodotoxin binding site 1 (tested on Nav1.2) (PubMed:19221510). The block is partial, with a residual current that can be completely blocked by TTX (PubMed:19221510). The toxin probably docks at a more superficial site in the outer vestibule of the channel than does TTX (PubMed:19221510). On rNav1.2/SCN2A, it produces a block that is only partially reversible. The block of Nav1.7 is modified when beta-subunits are coexpressed with the alpha subunit (PubMed:23146020). Hence, blocks of channels containing beta-1 and beta-3 subunits are more potent (compared to channels without beta subunits), whereas blocks of channels containing beta-2 and beta-4 subunits are less potent (compared to channels without beta subunits) (PubMed:23146020).</text>
</comment>
<comment type="function">
    <text evidence="10 12">Mu-conotoxin KIIIA-P2: This toxin potently blocks Nav1.2/SCN2A (Kd=230 nM, IC(50)=1.37 uM) and Nav1.4/SCN4A (Kd=830 nM, IC(50)=2 uM). It also moderately blocks Nav1.7/SCN9A (Kd=1.57 uM, IC(50)=5.4 uM) (PubMed:23167564, PubMed:35167877). In addition, this toxin may also inhibit other sodium channels, as does Mu-conotoxin KIIIA-P1 (PubMed:23167564).</text>
</comment>
<comment type="function">
    <text evidence="12">Mu-conotoxin KIIIA-N: This toxin moderately blocks Nav1.2/SCN2A (IC(50)=875 nM), Nav1.4/SCN4A (IC(50)=472 nM), and Nav1.7/SCN9A (IC(50)=887 nM) (PubMed:35167877).</text>
</comment>
<comment type="function">
    <text evidence="10">Mu-conotoxin KIIIB-P1: This toxin potently blocks Nav1.2/SCN2A (Kd=470 nM). In addition, this toxin may also inhibit other sodium channels, as does Mu-conotoxin KIIIA-P1.</text>
</comment>
<comment type="function">
    <text evidence="10">Mu-conotoxin KIIIB-P2: This toxin potently blocks Nav1.2/SCN2A (Kd=26 nM). In addition, this toxin may also inhibit other sodium channels, as does Mu-conotoxin KIIIA-P1.</text>
</comment>
<comment type="subunit">
    <text evidence="4">Monomer.</text>
</comment>
<comment type="subcellular location">
    <subcellularLocation>
        <location evidence="16">Secreted</location>
    </subcellularLocation>
</comment>
<comment type="tissue specificity">
    <text evidence="16">Expressed by the venom duct.</text>
</comment>
<comment type="domain">
    <text evidence="15">The cysteine framework is III (CC-C-C-CC). Classified in the M-5 branch, since 5 residues stand between the fourth and the fifth cysteine residues.</text>
</comment>
<comment type="PTM">
    <text evidence="10 12">Toxins with three different disulfide connectivities have been synthesized (PubMed:23167564, PubMed:35167877). The conotoxin mu-KIIIA-P1 shows the connectivity C1-C5, C2-C4, and C3-C6, whereas mu-KIIIA-P2 shows the connectivity C1-C6, C2-C4, and C3-C5 (PubMed:23167564). The conotoxin mu-KIIIA-N has the 'native' fold of the mu-conotoxin family (C1-C4, C2-C5, and C3-C6) (PubMed:35167877). Mu-KIIIA-P1 and mu-KIIIA-P2 are obtained by both thermodynamic oxidative folding and regioselective synthesis (PubMed:23167564, PubMed:35167877). Mu-KIIIA-P1 is the major oxidative folding product (PubMed:23167564). Mu-KIIIA-N is only obtained by regioselective synthesis (PubMed:35167877).</text>
</comment>
<comment type="miscellaneous">
    <text evidence="8 11">Negative results: has no effect on hNav1.5/SCN5A (PubMed:17724025, PubMed:21781281, PubMed:25658507). Has no effect on hNav1.8/SCN10A (PubMed:21781281).</text>
</comment>
<comment type="similarity">
    <text evidence="15">Belongs to the conotoxin M superfamily.</text>
</comment>
<evidence type="ECO:0000269" key="1">
    <source>
    </source>
</evidence>
<evidence type="ECO:0000269" key="2">
    <source>
    </source>
</evidence>
<evidence type="ECO:0000269" key="3">
    <source>
    </source>
</evidence>
<evidence type="ECO:0000269" key="4">
    <source>
    </source>
</evidence>
<evidence type="ECO:0000269" key="5">
    <source>
    </source>
</evidence>
<evidence type="ECO:0000269" key="6">
    <source>
    </source>
</evidence>
<evidence type="ECO:0000269" key="7">
    <source>
    </source>
</evidence>
<evidence type="ECO:0000269" key="8">
    <source>
    </source>
</evidence>
<evidence type="ECO:0000269" key="9">
    <source>
    </source>
</evidence>
<evidence type="ECO:0000269" key="10">
    <source>
    </source>
</evidence>
<evidence type="ECO:0000269" key="11">
    <source>
    </source>
</evidence>
<evidence type="ECO:0000269" key="12">
    <source>
    </source>
</evidence>
<evidence type="ECO:0000303" key="13">
    <source>
    </source>
</evidence>
<evidence type="ECO:0000303" key="14">
    <source>
    </source>
</evidence>
<evidence type="ECO:0000305" key="15"/>
<evidence type="ECO:0000305" key="16">
    <source>
    </source>
</evidence>
<evidence type="ECO:0000305" key="17">
    <source>
    </source>
</evidence>
<evidence type="ECO:0000305" key="18">
    <source>
    </source>
</evidence>
<evidence type="ECO:0000305" key="19">
    <source>
    </source>
</evidence>
<evidence type="ECO:0000305" key="20">
    <source>
    </source>
</evidence>
<evidence type="ECO:0007744" key="21">
    <source>
        <dbReference type="PDB" id="2LXG"/>
    </source>
</evidence>
<evidence type="ECO:0007744" key="22">
    <source>
        <dbReference type="PDB" id="6J8E"/>
    </source>
</evidence>
<evidence type="ECO:0007829" key="23">
    <source>
        <dbReference type="PDB" id="6J8E"/>
    </source>
</evidence>
<organism>
    <name type="scientific">Conus kinoshitai</name>
    <name type="common">Kinoshita's cone</name>
    <dbReference type="NCBI Taxonomy" id="376876"/>
    <lineage>
        <taxon>Eukaryota</taxon>
        <taxon>Metazoa</taxon>
        <taxon>Spiralia</taxon>
        <taxon>Lophotrochozoa</taxon>
        <taxon>Mollusca</taxon>
        <taxon>Gastropoda</taxon>
        <taxon>Caenogastropoda</taxon>
        <taxon>Neogastropoda</taxon>
        <taxon>Conoidea</taxon>
        <taxon>Conidae</taxon>
        <taxon>Conus</taxon>
        <taxon>Afonsoconus</taxon>
    </lineage>
</organism>
<dbReference type="PDB" id="2LXG">
    <property type="method" value="NMR"/>
    <property type="chains" value="A=5-20"/>
</dbReference>
<dbReference type="PDB" id="6J8E">
    <property type="method" value="EM"/>
    <property type="resolution" value="3.00 A"/>
    <property type="chains" value="D=5-20"/>
</dbReference>
<dbReference type="PDB" id="7SAV">
    <property type="method" value="NMR"/>
    <property type="chains" value="A=5-20"/>
</dbReference>
<dbReference type="PDB" id="7SAW">
    <property type="method" value="NMR"/>
    <property type="chains" value="A=5-20"/>
</dbReference>
<dbReference type="PDBsum" id="2LXG"/>
<dbReference type="PDBsum" id="6J8E"/>
<dbReference type="PDBsum" id="7SAV"/>
<dbReference type="PDBsum" id="7SAW"/>
<dbReference type="BMRB" id="P0C195"/>
<dbReference type="EMDB" id="EMD-9780"/>
<dbReference type="SMR" id="P0C195"/>
<dbReference type="TCDB" id="8.B.28.1.4">
    <property type="family name" value="the mu-conotoxin (mu-conotoxin) family"/>
</dbReference>
<dbReference type="ConoServer" id="1694">
    <property type="toxin name" value="KIIIA precursor"/>
</dbReference>
<dbReference type="EvolutionaryTrace" id="P0C195"/>
<dbReference type="GO" id="GO:0005576">
    <property type="term" value="C:extracellular region"/>
    <property type="evidence" value="ECO:0007669"/>
    <property type="project" value="UniProtKB-SubCell"/>
</dbReference>
<dbReference type="GO" id="GO:0017080">
    <property type="term" value="F:sodium channel regulator activity"/>
    <property type="evidence" value="ECO:0007669"/>
    <property type="project" value="UniProtKB-KW"/>
</dbReference>
<dbReference type="GO" id="GO:0090729">
    <property type="term" value="F:toxin activity"/>
    <property type="evidence" value="ECO:0007669"/>
    <property type="project" value="UniProtKB-KW"/>
</dbReference>
<sequence>KRNGCCNCSSKWCRDHSRCCGR</sequence>
<keyword id="KW-0002">3D-structure</keyword>
<keyword id="KW-0027">Amidation</keyword>
<keyword id="KW-0165">Cleavage on pair of basic residues</keyword>
<keyword id="KW-1015">Disulfide bond</keyword>
<keyword id="KW-0872">Ion channel impairing toxin</keyword>
<keyword id="KW-0528">Neurotoxin</keyword>
<keyword id="KW-0964">Secreted</keyword>
<keyword id="KW-0800">Toxin</keyword>
<keyword id="KW-0738">Voltage-gated sodium channel impairing toxin</keyword>